<accession>Q751F1</accession>
<organism>
    <name type="scientific">Eremothecium gossypii (strain ATCC 10895 / CBS 109.51 / FGSC 9923 / NRRL Y-1056)</name>
    <name type="common">Yeast</name>
    <name type="synonym">Ashbya gossypii</name>
    <dbReference type="NCBI Taxonomy" id="284811"/>
    <lineage>
        <taxon>Eukaryota</taxon>
        <taxon>Fungi</taxon>
        <taxon>Dikarya</taxon>
        <taxon>Ascomycota</taxon>
        <taxon>Saccharomycotina</taxon>
        <taxon>Saccharomycetes</taxon>
        <taxon>Saccharomycetales</taxon>
        <taxon>Saccharomycetaceae</taxon>
        <taxon>Eremothecium</taxon>
    </lineage>
</organism>
<comment type="function">
    <text evidence="1">Component of the nascent polypeptide-associated complex (NAC), a dynamic component of the ribosomal exit tunnel, protecting the emerging polypeptides from interaction with other cytoplasmic proteins to ensure appropriate nascent protein targeting. The NAC complex also promotes mitochondrial protein import by enhancing productive ribosome interactions with the outer mitochondrial membrane and blocks the inappropriate interaction of ribosomes translating non-secretory nascent polypeptides with translocation sites in the membrane of the endoplasmic reticulum. EGD1 may act as a transcription factor that exert a negative effect on the expression of several genes that are transcribed by RNA polymerase II.</text>
</comment>
<comment type="subunit">
    <text evidence="1">Part of the nascent polypeptide-associated complex (NAC), consisting of EGD2 and EGD1. NAC associates with ribosomes via EGD1 (By similarity).</text>
</comment>
<comment type="subcellular location">
    <subcellularLocation>
        <location evidence="1">Cytoplasm</location>
    </subcellularLocation>
    <subcellularLocation>
        <location evidence="1">Nucleus</location>
    </subcellularLocation>
    <text evidence="1">Predominantly cytoplasmic, may also transiently localize to the nucleus.</text>
</comment>
<comment type="similarity">
    <text evidence="4">Belongs to the NAC-beta family.</text>
</comment>
<sequence length="161" mass="17385">MPIDQEKLAKLQKLSANNKVGGTRRKLAKKSGTASANKDDSKLQAQLAKLKAVTMDQVEEANFFKDDGSVLHFNKVGVQVAPQHNTSVFYGIPQEKSLQDLFPSIIPQLGSESIDALTQLATQLQNAQAAAPATEGHEAGEKKDNDIPELIEGQSFDADVE</sequence>
<keyword id="KW-0963">Cytoplasm</keyword>
<keyword id="KW-0539">Nucleus</keyword>
<keyword id="KW-0653">Protein transport</keyword>
<keyword id="KW-1185">Reference proteome</keyword>
<keyword id="KW-0678">Repressor</keyword>
<keyword id="KW-0804">Transcription</keyword>
<keyword id="KW-0805">Transcription regulation</keyword>
<keyword id="KW-0813">Transport</keyword>
<proteinExistence type="inferred from homology"/>
<reference key="1">
    <citation type="journal article" date="2004" name="Science">
        <title>The Ashbya gossypii genome as a tool for mapping the ancient Saccharomyces cerevisiae genome.</title>
        <authorList>
            <person name="Dietrich F.S."/>
            <person name="Voegeli S."/>
            <person name="Brachat S."/>
            <person name="Lerch A."/>
            <person name="Gates K."/>
            <person name="Steiner S."/>
            <person name="Mohr C."/>
            <person name="Poehlmann R."/>
            <person name="Luedi P."/>
            <person name="Choi S."/>
            <person name="Wing R.A."/>
            <person name="Flavier A."/>
            <person name="Gaffney T.D."/>
            <person name="Philippsen P."/>
        </authorList>
    </citation>
    <scope>NUCLEOTIDE SEQUENCE [LARGE SCALE GENOMIC DNA]</scope>
    <source>
        <strain>ATCC 10895 / CBS 109.51 / FGSC 9923 / NRRL Y-1056</strain>
    </source>
</reference>
<reference key="2">
    <citation type="journal article" date="2013" name="G3 (Bethesda)">
        <title>Genomes of Ashbya fungi isolated from insects reveal four mating-type loci, numerous translocations, lack of transposons, and distinct gene duplications.</title>
        <authorList>
            <person name="Dietrich F.S."/>
            <person name="Voegeli S."/>
            <person name="Kuo S."/>
            <person name="Philippsen P."/>
        </authorList>
    </citation>
    <scope>GENOME REANNOTATION</scope>
    <source>
        <strain>ATCC 10895 / CBS 109.51 / FGSC 9923 / NRRL Y-1056</strain>
    </source>
</reference>
<dbReference type="EMBL" id="AE016820">
    <property type="protein sequence ID" value="AAS54246.1"/>
    <property type="molecule type" value="Genomic_DNA"/>
</dbReference>
<dbReference type="RefSeq" id="NP_986422.1">
    <property type="nucleotide sequence ID" value="NM_211484.1"/>
</dbReference>
<dbReference type="SMR" id="Q751F1"/>
<dbReference type="FunCoup" id="Q751F1">
    <property type="interactions" value="1247"/>
</dbReference>
<dbReference type="STRING" id="284811.Q751F1"/>
<dbReference type="EnsemblFungi" id="AAS54246">
    <property type="protein sequence ID" value="AAS54246"/>
    <property type="gene ID" value="AGOS_AGL245C"/>
</dbReference>
<dbReference type="GeneID" id="4622715"/>
<dbReference type="KEGG" id="ago:AGOS_AGL245C"/>
<dbReference type="eggNOG" id="KOG2240">
    <property type="taxonomic scope" value="Eukaryota"/>
</dbReference>
<dbReference type="HOGENOM" id="CLU_098726_2_2_1"/>
<dbReference type="InParanoid" id="Q751F1"/>
<dbReference type="OMA" id="RMQQSVR"/>
<dbReference type="OrthoDB" id="8033832at2759"/>
<dbReference type="Proteomes" id="UP000000591">
    <property type="component" value="Chromosome VII"/>
</dbReference>
<dbReference type="GO" id="GO:0030015">
    <property type="term" value="C:CCR4-NOT core complex"/>
    <property type="evidence" value="ECO:0007669"/>
    <property type="project" value="EnsemblFungi"/>
</dbReference>
<dbReference type="GO" id="GO:0005829">
    <property type="term" value="C:cytosol"/>
    <property type="evidence" value="ECO:0000318"/>
    <property type="project" value="GO_Central"/>
</dbReference>
<dbReference type="GO" id="GO:0005854">
    <property type="term" value="C:nascent polypeptide-associated complex"/>
    <property type="evidence" value="ECO:0000318"/>
    <property type="project" value="GO_Central"/>
</dbReference>
<dbReference type="GO" id="GO:0005634">
    <property type="term" value="C:nucleus"/>
    <property type="evidence" value="ECO:0007669"/>
    <property type="project" value="UniProtKB-SubCell"/>
</dbReference>
<dbReference type="GO" id="GO:0051082">
    <property type="term" value="F:unfolded protein binding"/>
    <property type="evidence" value="ECO:0007669"/>
    <property type="project" value="EnsemblFungi"/>
</dbReference>
<dbReference type="GO" id="GO:0006613">
    <property type="term" value="P:cotranslational protein targeting to membrane"/>
    <property type="evidence" value="ECO:0007669"/>
    <property type="project" value="EnsemblFungi"/>
</dbReference>
<dbReference type="GO" id="GO:0015031">
    <property type="term" value="P:protein transport"/>
    <property type="evidence" value="ECO:0007669"/>
    <property type="project" value="UniProtKB-KW"/>
</dbReference>
<dbReference type="CDD" id="cd22055">
    <property type="entry name" value="NAC_BTF3"/>
    <property type="match status" value="1"/>
</dbReference>
<dbReference type="FunFam" id="2.20.70.30:FF:000001">
    <property type="entry name" value="Transcription factor BTF3 homolog"/>
    <property type="match status" value="1"/>
</dbReference>
<dbReference type="Gene3D" id="2.20.70.30">
    <property type="entry name" value="Nascent polypeptide-associated complex domain"/>
    <property type="match status" value="1"/>
</dbReference>
<dbReference type="InterPro" id="IPR039370">
    <property type="entry name" value="BTF3"/>
</dbReference>
<dbReference type="InterPro" id="IPR038187">
    <property type="entry name" value="NAC_A/B_dom_sf"/>
</dbReference>
<dbReference type="InterPro" id="IPR002715">
    <property type="entry name" value="Nas_poly-pep-assoc_cplx_dom"/>
</dbReference>
<dbReference type="PANTHER" id="PTHR10351">
    <property type="entry name" value="TRANSCRIPTION FACTOR BTF3 FAMILY MEMBER"/>
    <property type="match status" value="1"/>
</dbReference>
<dbReference type="Pfam" id="PF01849">
    <property type="entry name" value="NAC"/>
    <property type="match status" value="1"/>
</dbReference>
<dbReference type="SMART" id="SM01407">
    <property type="entry name" value="NAC"/>
    <property type="match status" value="1"/>
</dbReference>
<dbReference type="PROSITE" id="PS51151">
    <property type="entry name" value="NAC_AB"/>
    <property type="match status" value="1"/>
</dbReference>
<evidence type="ECO:0000250" key="1"/>
<evidence type="ECO:0000255" key="2">
    <source>
        <dbReference type="PROSITE-ProRule" id="PRU00507"/>
    </source>
</evidence>
<evidence type="ECO:0000256" key="3">
    <source>
        <dbReference type="SAM" id="MobiDB-lite"/>
    </source>
</evidence>
<evidence type="ECO:0000305" key="4"/>
<name>NACB_EREGS</name>
<protein>
    <recommendedName>
        <fullName>Nascent polypeptide-associated complex subunit beta</fullName>
        <shortName>NAC-beta</shortName>
    </recommendedName>
    <alternativeName>
        <fullName>Beta-NAC</fullName>
    </alternativeName>
</protein>
<gene>
    <name type="primary">EGD1</name>
    <name type="ordered locus">AGL245C</name>
</gene>
<feature type="chain" id="PRO_0000273500" description="Nascent polypeptide-associated complex subunit beta">
    <location>
        <begin position="1"/>
        <end position="161"/>
    </location>
</feature>
<feature type="domain" description="NAC-A/B" evidence="2">
    <location>
        <begin position="37"/>
        <end position="102"/>
    </location>
</feature>
<feature type="region of interest" description="Disordered" evidence="3">
    <location>
        <begin position="14"/>
        <end position="41"/>
    </location>
</feature>
<feature type="region of interest" description="Disordered" evidence="3">
    <location>
        <begin position="125"/>
        <end position="161"/>
    </location>
</feature>
<feature type="compositionally biased region" description="Low complexity" evidence="3">
    <location>
        <begin position="125"/>
        <end position="134"/>
    </location>
</feature>
<feature type="compositionally biased region" description="Basic and acidic residues" evidence="3">
    <location>
        <begin position="135"/>
        <end position="146"/>
    </location>
</feature>